<evidence type="ECO:0000255" key="1">
    <source>
        <dbReference type="HAMAP-Rule" id="MF_00321"/>
    </source>
</evidence>
<keyword id="KW-0131">Cell cycle</keyword>
<keyword id="KW-0132">Cell division</keyword>
<keyword id="KW-0342">GTP-binding</keyword>
<keyword id="KW-0460">Magnesium</keyword>
<keyword id="KW-0479">Metal-binding</keyword>
<keyword id="KW-0547">Nucleotide-binding</keyword>
<keyword id="KW-0717">Septation</keyword>
<dbReference type="EMBL" id="BA000031">
    <property type="protein sequence ID" value="BAC58372.1"/>
    <property type="molecule type" value="Genomic_DNA"/>
</dbReference>
<dbReference type="RefSeq" id="NP_796488.1">
    <property type="nucleotide sequence ID" value="NC_004603.1"/>
</dbReference>
<dbReference type="SMR" id="Q87TG0"/>
<dbReference type="GeneID" id="1187576"/>
<dbReference type="KEGG" id="vpa:VP0109"/>
<dbReference type="PATRIC" id="fig|223926.6.peg.101"/>
<dbReference type="eggNOG" id="COG0218">
    <property type="taxonomic scope" value="Bacteria"/>
</dbReference>
<dbReference type="HOGENOM" id="CLU_033732_1_2_6"/>
<dbReference type="Proteomes" id="UP000002493">
    <property type="component" value="Chromosome 1"/>
</dbReference>
<dbReference type="GO" id="GO:0005829">
    <property type="term" value="C:cytosol"/>
    <property type="evidence" value="ECO:0007669"/>
    <property type="project" value="TreeGrafter"/>
</dbReference>
<dbReference type="GO" id="GO:0005525">
    <property type="term" value="F:GTP binding"/>
    <property type="evidence" value="ECO:0007669"/>
    <property type="project" value="UniProtKB-UniRule"/>
</dbReference>
<dbReference type="GO" id="GO:0046872">
    <property type="term" value="F:metal ion binding"/>
    <property type="evidence" value="ECO:0007669"/>
    <property type="project" value="UniProtKB-KW"/>
</dbReference>
<dbReference type="GO" id="GO:0000917">
    <property type="term" value="P:division septum assembly"/>
    <property type="evidence" value="ECO:0007669"/>
    <property type="project" value="UniProtKB-KW"/>
</dbReference>
<dbReference type="CDD" id="cd01876">
    <property type="entry name" value="YihA_EngB"/>
    <property type="match status" value="1"/>
</dbReference>
<dbReference type="FunFam" id="3.40.50.300:FF:000098">
    <property type="entry name" value="Probable GTP-binding protein EngB"/>
    <property type="match status" value="1"/>
</dbReference>
<dbReference type="Gene3D" id="3.40.50.300">
    <property type="entry name" value="P-loop containing nucleotide triphosphate hydrolases"/>
    <property type="match status" value="1"/>
</dbReference>
<dbReference type="HAMAP" id="MF_00321">
    <property type="entry name" value="GTPase_EngB"/>
    <property type="match status" value="1"/>
</dbReference>
<dbReference type="InterPro" id="IPR030393">
    <property type="entry name" value="G_ENGB_dom"/>
</dbReference>
<dbReference type="InterPro" id="IPR006073">
    <property type="entry name" value="GTP-bd"/>
</dbReference>
<dbReference type="InterPro" id="IPR019987">
    <property type="entry name" value="GTP-bd_ribosome_bio_YsxC"/>
</dbReference>
<dbReference type="InterPro" id="IPR027417">
    <property type="entry name" value="P-loop_NTPase"/>
</dbReference>
<dbReference type="NCBIfam" id="TIGR03598">
    <property type="entry name" value="GTPase_YsxC"/>
    <property type="match status" value="1"/>
</dbReference>
<dbReference type="PANTHER" id="PTHR11649:SF13">
    <property type="entry name" value="ENGB-TYPE G DOMAIN-CONTAINING PROTEIN"/>
    <property type="match status" value="1"/>
</dbReference>
<dbReference type="PANTHER" id="PTHR11649">
    <property type="entry name" value="MSS1/TRME-RELATED GTP-BINDING PROTEIN"/>
    <property type="match status" value="1"/>
</dbReference>
<dbReference type="Pfam" id="PF01926">
    <property type="entry name" value="MMR_HSR1"/>
    <property type="match status" value="1"/>
</dbReference>
<dbReference type="SUPFAM" id="SSF52540">
    <property type="entry name" value="P-loop containing nucleoside triphosphate hydrolases"/>
    <property type="match status" value="1"/>
</dbReference>
<dbReference type="PROSITE" id="PS51706">
    <property type="entry name" value="G_ENGB"/>
    <property type="match status" value="1"/>
</dbReference>
<feature type="chain" id="PRO_0000157798" description="Probable GTP-binding protein EngB">
    <location>
        <begin position="1"/>
        <end position="219"/>
    </location>
</feature>
<feature type="domain" description="EngB-type G" evidence="1">
    <location>
        <begin position="26"/>
        <end position="200"/>
    </location>
</feature>
<feature type="binding site" evidence="1">
    <location>
        <begin position="34"/>
        <end position="41"/>
    </location>
    <ligand>
        <name>GTP</name>
        <dbReference type="ChEBI" id="CHEBI:37565"/>
    </ligand>
</feature>
<feature type="binding site" evidence="1">
    <location>
        <position position="41"/>
    </location>
    <ligand>
        <name>Mg(2+)</name>
        <dbReference type="ChEBI" id="CHEBI:18420"/>
    </ligand>
</feature>
<feature type="binding site" evidence="1">
    <location>
        <begin position="61"/>
        <end position="65"/>
    </location>
    <ligand>
        <name>GTP</name>
        <dbReference type="ChEBI" id="CHEBI:37565"/>
    </ligand>
</feature>
<feature type="binding site" evidence="1">
    <location>
        <position position="63"/>
    </location>
    <ligand>
        <name>Mg(2+)</name>
        <dbReference type="ChEBI" id="CHEBI:18420"/>
    </ligand>
</feature>
<feature type="binding site" evidence="1">
    <location>
        <begin position="79"/>
        <end position="82"/>
    </location>
    <ligand>
        <name>GTP</name>
        <dbReference type="ChEBI" id="CHEBI:37565"/>
    </ligand>
</feature>
<feature type="binding site" evidence="1">
    <location>
        <begin position="146"/>
        <end position="149"/>
    </location>
    <ligand>
        <name>GTP</name>
        <dbReference type="ChEBI" id="CHEBI:37565"/>
    </ligand>
</feature>
<feature type="binding site" evidence="1">
    <location>
        <begin position="179"/>
        <end position="181"/>
    </location>
    <ligand>
        <name>GTP</name>
        <dbReference type="ChEBI" id="CHEBI:37565"/>
    </ligand>
</feature>
<comment type="function">
    <text evidence="1">Necessary for normal cell division and for the maintenance of normal septation.</text>
</comment>
<comment type="cofactor">
    <cofactor evidence="1">
        <name>Mg(2+)</name>
        <dbReference type="ChEBI" id="CHEBI:18420"/>
    </cofactor>
</comment>
<comment type="similarity">
    <text evidence="1">Belongs to the TRAFAC class TrmE-Era-EngA-EngB-Septin-like GTPase superfamily. EngB GTPase family.</text>
</comment>
<sequence>MSVKIHYQNTHFITSAPDIRHLPEDEGVEIAFAGRSNAGKSSALNRLTNQKSLAKTSKTPGRTQLINLFKVEEGCHIVDLPGYGFAQVPVEMKNKWQKSLGEYLQKRECLKGLVVLMDIRHPMKDLDQQMIFWAIDSRIPVQVLLTKADKLKSGARKQTLLKIRKQVETFGGDVSVDVFSSLKGLGVDQLRAKLDTWFAPALAHLIEEDDLEMPESNEE</sequence>
<organism>
    <name type="scientific">Vibrio parahaemolyticus serotype O3:K6 (strain RIMD 2210633)</name>
    <dbReference type="NCBI Taxonomy" id="223926"/>
    <lineage>
        <taxon>Bacteria</taxon>
        <taxon>Pseudomonadati</taxon>
        <taxon>Pseudomonadota</taxon>
        <taxon>Gammaproteobacteria</taxon>
        <taxon>Vibrionales</taxon>
        <taxon>Vibrionaceae</taxon>
        <taxon>Vibrio</taxon>
    </lineage>
</organism>
<protein>
    <recommendedName>
        <fullName evidence="1">Probable GTP-binding protein EngB</fullName>
    </recommendedName>
</protein>
<gene>
    <name evidence="1" type="primary">engB</name>
    <name type="ordered locus">VP0109</name>
</gene>
<reference key="1">
    <citation type="journal article" date="2003" name="Lancet">
        <title>Genome sequence of Vibrio parahaemolyticus: a pathogenic mechanism distinct from that of V. cholerae.</title>
        <authorList>
            <person name="Makino K."/>
            <person name="Oshima K."/>
            <person name="Kurokawa K."/>
            <person name="Yokoyama K."/>
            <person name="Uda T."/>
            <person name="Tagomori K."/>
            <person name="Iijima Y."/>
            <person name="Najima M."/>
            <person name="Nakano M."/>
            <person name="Yamashita A."/>
            <person name="Kubota Y."/>
            <person name="Kimura S."/>
            <person name="Yasunaga T."/>
            <person name="Honda T."/>
            <person name="Shinagawa H."/>
            <person name="Hattori M."/>
            <person name="Iida T."/>
        </authorList>
    </citation>
    <scope>NUCLEOTIDE SEQUENCE [LARGE SCALE GENOMIC DNA]</scope>
    <source>
        <strain>RIMD 2210633</strain>
    </source>
</reference>
<name>ENGB_VIBPA</name>
<proteinExistence type="inferred from homology"/>
<accession>Q87TG0</accession>